<geneLocation type="plasmid">
    <name>pTiAch5</name>
</geneLocation>
<comment type="function">
    <text>Positive regulatory protein for the occ operon involved in octopine catabolism and uptake. Also acts as a negative regulator of its expression.</text>
</comment>
<comment type="similarity">
    <text evidence="2">Belongs to the LysR transcriptional regulatory family.</text>
</comment>
<gene>
    <name type="primary">occR</name>
</gene>
<proteinExistence type="evidence at protein level"/>
<feature type="chain" id="PRO_0000105697" description="Octopine catabolism/uptake operon regulatory protein OccR">
    <location>
        <begin position="1"/>
        <end position="298"/>
    </location>
</feature>
<feature type="domain" description="HTH lysR-type" evidence="1">
    <location>
        <begin position="1"/>
        <end position="58"/>
    </location>
</feature>
<feature type="DNA-binding region" description="H-T-H motif" evidence="1">
    <location>
        <begin position="18"/>
        <end position="37"/>
    </location>
</feature>
<feature type="strand" evidence="3">
    <location>
        <begin position="92"/>
        <end position="97"/>
    </location>
</feature>
<feature type="helix" evidence="3">
    <location>
        <begin position="99"/>
        <end position="102"/>
    </location>
</feature>
<feature type="helix" evidence="3">
    <location>
        <begin position="105"/>
        <end position="114"/>
    </location>
</feature>
<feature type="strand" evidence="3">
    <location>
        <begin position="121"/>
        <end position="126"/>
    </location>
</feature>
<feature type="helix" evidence="3">
    <location>
        <begin position="129"/>
        <end position="137"/>
    </location>
</feature>
<feature type="strand" evidence="3">
    <location>
        <begin position="142"/>
        <end position="148"/>
    </location>
</feature>
<feature type="strand" evidence="3">
    <location>
        <begin position="155"/>
        <end position="163"/>
    </location>
</feature>
<feature type="strand" evidence="3">
    <location>
        <begin position="165"/>
        <end position="169"/>
    </location>
</feature>
<feature type="helix" evidence="3">
    <location>
        <begin position="173"/>
        <end position="176"/>
    </location>
</feature>
<feature type="helix" evidence="3">
    <location>
        <begin position="182"/>
        <end position="185"/>
    </location>
</feature>
<feature type="strand" evidence="3">
    <location>
        <begin position="190"/>
        <end position="192"/>
    </location>
</feature>
<feature type="helix" evidence="3">
    <location>
        <begin position="198"/>
        <end position="206"/>
    </location>
</feature>
<feature type="turn" evidence="3">
    <location>
        <begin position="207"/>
        <end position="209"/>
    </location>
</feature>
<feature type="helix" evidence="3">
    <location>
        <begin position="221"/>
        <end position="229"/>
    </location>
</feature>
<feature type="strand" evidence="3">
    <location>
        <begin position="234"/>
        <end position="237"/>
    </location>
</feature>
<feature type="helix" evidence="3">
    <location>
        <begin position="239"/>
        <end position="242"/>
    </location>
</feature>
<feature type="helix" evidence="3">
    <location>
        <begin position="243"/>
        <end position="245"/>
    </location>
</feature>
<feature type="turn" evidence="3">
    <location>
        <begin position="246"/>
        <end position="248"/>
    </location>
</feature>
<feature type="strand" evidence="3">
    <location>
        <begin position="249"/>
        <end position="256"/>
    </location>
</feature>
<feature type="strand" evidence="3">
    <location>
        <begin position="259"/>
        <end position="270"/>
    </location>
</feature>
<feature type="helix" evidence="3">
    <location>
        <begin position="274"/>
        <end position="293"/>
    </location>
</feature>
<accession>P0A4T4</accession>
<accession>P81526</accession>
<accession>Q00679</accession>
<dbReference type="EMBL" id="M65108">
    <property type="protein sequence ID" value="AAA50520.1"/>
    <property type="molecule type" value="Genomic_DNA"/>
</dbReference>
<dbReference type="EMBL" id="Z30328">
    <property type="protein sequence ID" value="CAA82982.1"/>
    <property type="molecule type" value="Genomic_DNA"/>
</dbReference>
<dbReference type="PIR" id="S28672">
    <property type="entry name" value="S28672"/>
</dbReference>
<dbReference type="RefSeq" id="NP_059715.1">
    <property type="nucleotide sequence ID" value="NC_002377.1"/>
</dbReference>
<dbReference type="PDB" id="5VVI">
    <property type="method" value="X-ray"/>
    <property type="resolution" value="2.28 A"/>
    <property type="chains" value="A/B/C=92-298"/>
</dbReference>
<dbReference type="PDBsum" id="5VVI"/>
<dbReference type="SMR" id="P0A4T4"/>
<dbReference type="GO" id="GO:0003700">
    <property type="term" value="F:DNA-binding transcription factor activity"/>
    <property type="evidence" value="ECO:0007669"/>
    <property type="project" value="InterPro"/>
</dbReference>
<dbReference type="GO" id="GO:0043565">
    <property type="term" value="F:sequence-specific DNA binding"/>
    <property type="evidence" value="ECO:0007669"/>
    <property type="project" value="TreeGrafter"/>
</dbReference>
<dbReference type="GO" id="GO:0010628">
    <property type="term" value="P:positive regulation of gene expression"/>
    <property type="evidence" value="ECO:0007669"/>
    <property type="project" value="TreeGrafter"/>
</dbReference>
<dbReference type="CDD" id="cd08457">
    <property type="entry name" value="PBP2_OccR"/>
    <property type="match status" value="1"/>
</dbReference>
<dbReference type="Gene3D" id="3.40.190.10">
    <property type="entry name" value="Periplasmic binding protein-like II"/>
    <property type="match status" value="2"/>
</dbReference>
<dbReference type="Gene3D" id="1.10.10.10">
    <property type="entry name" value="Winged helix-like DNA-binding domain superfamily/Winged helix DNA-binding domain"/>
    <property type="match status" value="1"/>
</dbReference>
<dbReference type="InterPro" id="IPR005119">
    <property type="entry name" value="LysR_subst-bd"/>
</dbReference>
<dbReference type="InterPro" id="IPR037415">
    <property type="entry name" value="OccR_PBP2"/>
</dbReference>
<dbReference type="InterPro" id="IPR000847">
    <property type="entry name" value="Tscrpt_reg_HTH_LysR"/>
</dbReference>
<dbReference type="InterPro" id="IPR036388">
    <property type="entry name" value="WH-like_DNA-bd_sf"/>
</dbReference>
<dbReference type="InterPro" id="IPR036390">
    <property type="entry name" value="WH_DNA-bd_sf"/>
</dbReference>
<dbReference type="PANTHER" id="PTHR30427">
    <property type="entry name" value="TRANSCRIPTIONAL ACTIVATOR PROTEIN LYSR"/>
    <property type="match status" value="1"/>
</dbReference>
<dbReference type="PANTHER" id="PTHR30427:SF1">
    <property type="entry name" value="TRANSCRIPTIONAL ACTIVATOR PROTEIN LYSR"/>
    <property type="match status" value="1"/>
</dbReference>
<dbReference type="Pfam" id="PF00126">
    <property type="entry name" value="HTH_1"/>
    <property type="match status" value="1"/>
</dbReference>
<dbReference type="Pfam" id="PF03466">
    <property type="entry name" value="LysR_substrate"/>
    <property type="match status" value="1"/>
</dbReference>
<dbReference type="SUPFAM" id="SSF53850">
    <property type="entry name" value="Periplasmic binding protein-like II"/>
    <property type="match status" value="1"/>
</dbReference>
<dbReference type="SUPFAM" id="SSF46785">
    <property type="entry name" value="Winged helix' DNA-binding domain"/>
    <property type="match status" value="1"/>
</dbReference>
<dbReference type="PROSITE" id="PS50931">
    <property type="entry name" value="HTH_LYSR"/>
    <property type="match status" value="1"/>
</dbReference>
<evidence type="ECO:0000255" key="1">
    <source>
        <dbReference type="PROSITE-ProRule" id="PRU00253"/>
    </source>
</evidence>
<evidence type="ECO:0000305" key="2"/>
<evidence type="ECO:0007829" key="3">
    <source>
        <dbReference type="PDB" id="5VVI"/>
    </source>
</evidence>
<organism>
    <name type="scientific">Agrobacterium tumefaciens (strain Ach5)</name>
    <dbReference type="NCBI Taxonomy" id="176298"/>
    <lineage>
        <taxon>Bacteria</taxon>
        <taxon>Pseudomonadati</taxon>
        <taxon>Pseudomonadota</taxon>
        <taxon>Alphaproteobacteria</taxon>
        <taxon>Hyphomicrobiales</taxon>
        <taxon>Rhizobiaceae</taxon>
        <taxon>Rhizobium/Agrobacterium group</taxon>
        <taxon>Agrobacterium</taxon>
        <taxon>Agrobacterium tumefaciens complex</taxon>
    </lineage>
</organism>
<reference key="1">
    <citation type="journal article" date="1991" name="Mol. Plant Microbe Interact.">
        <title>Positive regulators of opine-inducible promoters in the nopaline and octopine catabolism regions of Ti plasmids.</title>
        <authorList>
            <person name="von Lintig J."/>
            <person name="Zanker H."/>
            <person name="Schroeder J."/>
        </authorList>
    </citation>
    <scope>NUCLEOTIDE SEQUENCE [GENOMIC DNA]</scope>
</reference>
<reference key="2">
    <citation type="book" date="1992" name="Guanidino compounds in biology and medicine">
        <title>Catabolism of the guanidino compounds nopaline, octopine, and L-arginine in Agrobacterium tumefaciens: enzymes, genes, and regulation.</title>
        <editorList>
            <person name="De Deyn P.P."/>
            <person name="Marescau B."/>
            <person name="Stalon V."/>
            <person name="Qureshi I.A."/>
        </editorList>
        <authorList>
            <person name="Schroeder J."/>
            <person name="von Lintig J."/>
            <person name="Zanker H."/>
        </authorList>
    </citation>
    <scope>NUCLEOTIDE SEQUENCE [GENOMIC DNA]</scope>
</reference>
<name>OCCR_AGRT4</name>
<keyword id="KW-0002">3D-structure</keyword>
<keyword id="KW-0010">Activator</keyword>
<keyword id="KW-0238">DNA-binding</keyword>
<keyword id="KW-0614">Plasmid</keyword>
<keyword id="KW-0804">Transcription</keyword>
<keyword id="KW-0805">Transcription regulation</keyword>
<sequence>MNLRQVEAFRAVMLTGQMTAAAELMLVTQPAISRLIKDFEQATKLQLFERRGNHIIPTQEAKTLWKEVDRAFVGLNHIGNLAADIGRQAAGTLRIAAMPALANGLLPRFLAQFIRDRPNLQVSLMGLPSSMVMEAVASGRADIGYADGPQERQGFLIETRSLPAVVAVPMGHRLAGLDRVTPQDLAGERIIKQETGTLFAMRVEVAIGGIQRRPSIEVSLSHTALSLVREGAGIAIIDPAAAIEFTDRIVLRPFSIFIDAGFLEVRSAIGAPSTIVDRFTTEFWRFHDDLMKQNGLME</sequence>
<protein>
    <recommendedName>
        <fullName>Octopine catabolism/uptake operon regulatory protein OccR</fullName>
    </recommendedName>
</protein>